<protein>
    <recommendedName>
        <fullName>Teichoic acid D-alanine hydrolase</fullName>
        <ecNumber evidence="2">3.1.1.103</ecNumber>
    </recommendedName>
    <alternativeName>
        <fullName>Teichoic acid D-alanine esterase</fullName>
    </alternativeName>
</protein>
<accession>Q6GAF6</accession>
<sequence length="397" mass="46067">MKFNKVKLVIHACVLLFIIISIALIFHRLQTKTHSIDPIHKETKLSDNEKYLVDRNKEKVAPSKLKEVYNSKDPKYKKIDKYLQSSLFNGSVAIYENGKLKMSKGYGYQDFEKGIKNTPNTMFLIGSAQKFSTGLLLKQLEEEHKININDPVSKYLPWFKTSKPIPLKDLMLHQSGLYKYKSSKDYKNLDQAVKAIQKRGIDPKKYKKHMYNDGNYLVLAKVIEEVTGKSYAENYYTKIGDPLKLQHTAFYDEQPFKKYLAKGYAYNSTGLSFLRPNILDQYYGAGNLYMTPTDMGKLITQIQQYKLFSPKITNPLLHEFGTKQYPDEYRYGFYAKPTLNRLNGGFFGQVFTVYYNDKYVVVLALNVKGNNEVRIKHIYNDILKQNKPYNTKGVIVQ</sequence>
<gene>
    <name type="primary">fmtA</name>
    <name type="synonym">fmt</name>
    <name type="ordered locus">SAS0992</name>
</gene>
<organism>
    <name type="scientific">Staphylococcus aureus (strain MSSA476)</name>
    <dbReference type="NCBI Taxonomy" id="282459"/>
    <lineage>
        <taxon>Bacteria</taxon>
        <taxon>Bacillati</taxon>
        <taxon>Bacillota</taxon>
        <taxon>Bacilli</taxon>
        <taxon>Bacillales</taxon>
        <taxon>Staphylococcaceae</taxon>
        <taxon>Staphylococcus</taxon>
    </lineage>
</organism>
<name>FMTA_STAAS</name>
<proteinExistence type="inferred from homology"/>
<comment type="function">
    <text evidence="2">Catalyzes the liberation of D-alanyl moieties present on wall teichoic acid (WTA) and lipoteichoic acid (LTA). Affects the methicillin resistance level and autolysis in the presence of Triton X-100 as well as the cell wall structure.</text>
</comment>
<comment type="catalytic activity">
    <reaction evidence="2">
        <text>[(4-D-Ala)-(2-GlcNAc)-Rib-ol-P]n-[Gro-P]m-beta-D-ManNAc-(1-&gt;4)-alpha-D-GlcNAc-P-peptidoglycan + n H2O = [(2-GlcNAc)-Rib-ol-P]n-[Gro-P]m-beta-D-ManNAc-(1-&gt;4)-alpha-D-GlcNAc-P-peptidoglycan + n D-alanine.</text>
        <dbReference type="EC" id="3.1.1.103"/>
    </reaction>
</comment>
<comment type="subcellular location">
    <subcellularLocation>
        <location evidence="1">Cell membrane</location>
        <topology evidence="1">Peripheral membrane protein</topology>
    </subcellularLocation>
</comment>
<keyword id="KW-0046">Antibiotic resistance</keyword>
<keyword id="KW-1003">Cell membrane</keyword>
<keyword id="KW-0961">Cell wall biogenesis/degradation</keyword>
<keyword id="KW-0378">Hydrolase</keyword>
<keyword id="KW-0472">Membrane</keyword>
<keyword id="KW-0732">Signal</keyword>
<reference key="1">
    <citation type="journal article" date="2004" name="Proc. Natl. Acad. Sci. U.S.A.">
        <title>Complete genomes of two clinical Staphylococcus aureus strains: evidence for the rapid evolution of virulence and drug resistance.</title>
        <authorList>
            <person name="Holden M.T.G."/>
            <person name="Feil E.J."/>
            <person name="Lindsay J.A."/>
            <person name="Peacock S.J."/>
            <person name="Day N.P.J."/>
            <person name="Enright M.C."/>
            <person name="Foster T.J."/>
            <person name="Moore C.E."/>
            <person name="Hurst L."/>
            <person name="Atkin R."/>
            <person name="Barron A."/>
            <person name="Bason N."/>
            <person name="Bentley S.D."/>
            <person name="Chillingworth C."/>
            <person name="Chillingworth T."/>
            <person name="Churcher C."/>
            <person name="Clark L."/>
            <person name="Corton C."/>
            <person name="Cronin A."/>
            <person name="Doggett J."/>
            <person name="Dowd L."/>
            <person name="Feltwell T."/>
            <person name="Hance Z."/>
            <person name="Harris B."/>
            <person name="Hauser H."/>
            <person name="Holroyd S."/>
            <person name="Jagels K."/>
            <person name="James K.D."/>
            <person name="Lennard N."/>
            <person name="Line A."/>
            <person name="Mayes R."/>
            <person name="Moule S."/>
            <person name="Mungall K."/>
            <person name="Ormond D."/>
            <person name="Quail M.A."/>
            <person name="Rabbinowitsch E."/>
            <person name="Rutherford K.M."/>
            <person name="Sanders M."/>
            <person name="Sharp S."/>
            <person name="Simmonds M."/>
            <person name="Stevens K."/>
            <person name="Whitehead S."/>
            <person name="Barrell B.G."/>
            <person name="Spratt B.G."/>
            <person name="Parkhill J."/>
        </authorList>
    </citation>
    <scope>NUCLEOTIDE SEQUENCE [LARGE SCALE GENOMIC DNA]</scope>
    <source>
        <strain>MSSA476</strain>
    </source>
</reference>
<feature type="signal peptide" evidence="3">
    <location>
        <begin position="1"/>
        <end position="23"/>
    </location>
</feature>
<feature type="chain" id="PRO_0000043103" description="Teichoic acid D-alanine hydrolase">
    <location>
        <begin position="24"/>
        <end position="397"/>
    </location>
</feature>
<dbReference type="EC" id="3.1.1.103" evidence="2"/>
<dbReference type="EMBL" id="BX571857">
    <property type="protein sequence ID" value="CAG42767.1"/>
    <property type="molecule type" value="Genomic_DNA"/>
</dbReference>
<dbReference type="RefSeq" id="WP_000671245.1">
    <property type="nucleotide sequence ID" value="NC_002953.3"/>
</dbReference>
<dbReference type="SMR" id="Q6GAF6"/>
<dbReference type="MEROPS" id="S12.006"/>
<dbReference type="KEGG" id="sas:SAS0992"/>
<dbReference type="HOGENOM" id="CLU_020027_0_0_9"/>
<dbReference type="GO" id="GO:0005886">
    <property type="term" value="C:plasma membrane"/>
    <property type="evidence" value="ECO:0007669"/>
    <property type="project" value="UniProtKB-SubCell"/>
</dbReference>
<dbReference type="GO" id="GO:0016787">
    <property type="term" value="F:hydrolase activity"/>
    <property type="evidence" value="ECO:0007669"/>
    <property type="project" value="UniProtKB-KW"/>
</dbReference>
<dbReference type="GO" id="GO:0071555">
    <property type="term" value="P:cell wall organization"/>
    <property type="evidence" value="ECO:0007669"/>
    <property type="project" value="UniProtKB-KW"/>
</dbReference>
<dbReference type="GO" id="GO:0046677">
    <property type="term" value="P:response to antibiotic"/>
    <property type="evidence" value="ECO:0007669"/>
    <property type="project" value="UniProtKB-KW"/>
</dbReference>
<dbReference type="FunFam" id="3.40.710.10:FF:000040">
    <property type="entry name" value="Methicillin resistance protein FmtA"/>
    <property type="match status" value="1"/>
</dbReference>
<dbReference type="Gene3D" id="3.40.710.10">
    <property type="entry name" value="DD-peptidase/beta-lactamase superfamily"/>
    <property type="match status" value="1"/>
</dbReference>
<dbReference type="InterPro" id="IPR050491">
    <property type="entry name" value="Bact_CellWall_Synth/Modif"/>
</dbReference>
<dbReference type="InterPro" id="IPR001466">
    <property type="entry name" value="Beta-lactam-related"/>
</dbReference>
<dbReference type="InterPro" id="IPR012338">
    <property type="entry name" value="Beta-lactam/transpept-like"/>
</dbReference>
<dbReference type="PANTHER" id="PTHR46825">
    <property type="entry name" value="D-ALANYL-D-ALANINE-CARBOXYPEPTIDASE/ENDOPEPTIDASE AMPH"/>
    <property type="match status" value="1"/>
</dbReference>
<dbReference type="PANTHER" id="PTHR46825:SF11">
    <property type="entry name" value="PENICILLIN-BINDING PROTEIN 4"/>
    <property type="match status" value="1"/>
</dbReference>
<dbReference type="Pfam" id="PF00144">
    <property type="entry name" value="Beta-lactamase"/>
    <property type="match status" value="1"/>
</dbReference>
<dbReference type="SUPFAM" id="SSF56601">
    <property type="entry name" value="beta-lactamase/transpeptidase-like"/>
    <property type="match status" value="1"/>
</dbReference>
<evidence type="ECO:0000250" key="1"/>
<evidence type="ECO:0000250" key="2">
    <source>
        <dbReference type="UniProtKB" id="Q7A2T0"/>
    </source>
</evidence>
<evidence type="ECO:0000255" key="3"/>